<organism>
    <name type="scientific">Escherichia coli O81 (strain ED1a)</name>
    <dbReference type="NCBI Taxonomy" id="585397"/>
    <lineage>
        <taxon>Bacteria</taxon>
        <taxon>Pseudomonadati</taxon>
        <taxon>Pseudomonadota</taxon>
        <taxon>Gammaproteobacteria</taxon>
        <taxon>Enterobacterales</taxon>
        <taxon>Enterobacteriaceae</taxon>
        <taxon>Escherichia</taxon>
    </lineage>
</organism>
<accession>B7MQI7</accession>
<evidence type="ECO:0000255" key="1">
    <source>
        <dbReference type="HAMAP-Rule" id="MF_00017"/>
    </source>
</evidence>
<reference key="1">
    <citation type="journal article" date="2009" name="PLoS Genet.">
        <title>Organised genome dynamics in the Escherichia coli species results in highly diverse adaptive paths.</title>
        <authorList>
            <person name="Touchon M."/>
            <person name="Hoede C."/>
            <person name="Tenaillon O."/>
            <person name="Barbe V."/>
            <person name="Baeriswyl S."/>
            <person name="Bidet P."/>
            <person name="Bingen E."/>
            <person name="Bonacorsi S."/>
            <person name="Bouchier C."/>
            <person name="Bouvet O."/>
            <person name="Calteau A."/>
            <person name="Chiapello H."/>
            <person name="Clermont O."/>
            <person name="Cruveiller S."/>
            <person name="Danchin A."/>
            <person name="Diard M."/>
            <person name="Dossat C."/>
            <person name="Karoui M.E."/>
            <person name="Frapy E."/>
            <person name="Garry L."/>
            <person name="Ghigo J.M."/>
            <person name="Gilles A.M."/>
            <person name="Johnson J."/>
            <person name="Le Bouguenec C."/>
            <person name="Lescat M."/>
            <person name="Mangenot S."/>
            <person name="Martinez-Jehanne V."/>
            <person name="Matic I."/>
            <person name="Nassif X."/>
            <person name="Oztas S."/>
            <person name="Petit M.A."/>
            <person name="Pichon C."/>
            <person name="Rouy Z."/>
            <person name="Ruf C.S."/>
            <person name="Schneider D."/>
            <person name="Tourret J."/>
            <person name="Vacherie B."/>
            <person name="Vallenet D."/>
            <person name="Medigue C."/>
            <person name="Rocha E.P.C."/>
            <person name="Denamur E."/>
        </authorList>
    </citation>
    <scope>NUCLEOTIDE SEQUENCE [LARGE SCALE GENOMIC DNA]</scope>
    <source>
        <strain>ED1a</strain>
    </source>
</reference>
<gene>
    <name evidence="1" type="primary">recR</name>
    <name type="ordered locus">ECED1_0495</name>
</gene>
<protein>
    <recommendedName>
        <fullName evidence="1">Recombination protein RecR</fullName>
    </recommendedName>
</protein>
<feature type="chain" id="PRO_1000195389" description="Recombination protein RecR">
    <location>
        <begin position="1"/>
        <end position="201"/>
    </location>
</feature>
<feature type="domain" description="Toprim" evidence="1">
    <location>
        <begin position="81"/>
        <end position="176"/>
    </location>
</feature>
<feature type="zinc finger region" description="C4-type" evidence="1">
    <location>
        <begin position="57"/>
        <end position="72"/>
    </location>
</feature>
<proteinExistence type="inferred from homology"/>
<comment type="function">
    <text evidence="1">May play a role in DNA repair. It seems to be involved in an RecBC-independent recombinational process of DNA repair. It may act with RecF and RecO.</text>
</comment>
<comment type="similarity">
    <text evidence="1">Belongs to the RecR family.</text>
</comment>
<sequence>MQTSPLLTQLMEALRCLPGVGPKSAQRMAFTLLQRDRSGGMRLAQALTRAMSEIGHCADCRTFTEQEVCNICSNPRRQENGQICVVESPADIYAIEQTGQFSGRYFVLMGHLSPLDGIGPDDIGLDRLEQRLAEEKITEVILATNPTVEGEATANYIAELCAQYDVEASRIAHGVPVGGELEMVDGTTLSHSLAGRHKIRF</sequence>
<keyword id="KW-0227">DNA damage</keyword>
<keyword id="KW-0233">DNA recombination</keyword>
<keyword id="KW-0234">DNA repair</keyword>
<keyword id="KW-0479">Metal-binding</keyword>
<keyword id="KW-0862">Zinc</keyword>
<keyword id="KW-0863">Zinc-finger</keyword>
<dbReference type="EMBL" id="CU928162">
    <property type="protein sequence ID" value="CAR06705.1"/>
    <property type="molecule type" value="Genomic_DNA"/>
</dbReference>
<dbReference type="RefSeq" id="WP_001195025.1">
    <property type="nucleotide sequence ID" value="NC_011745.1"/>
</dbReference>
<dbReference type="SMR" id="B7MQI7"/>
<dbReference type="GeneID" id="93776978"/>
<dbReference type="KEGG" id="ecq:ECED1_0495"/>
<dbReference type="HOGENOM" id="CLU_060739_1_2_6"/>
<dbReference type="Proteomes" id="UP000000748">
    <property type="component" value="Chromosome"/>
</dbReference>
<dbReference type="GO" id="GO:0003677">
    <property type="term" value="F:DNA binding"/>
    <property type="evidence" value="ECO:0007669"/>
    <property type="project" value="UniProtKB-UniRule"/>
</dbReference>
<dbReference type="GO" id="GO:0008270">
    <property type="term" value="F:zinc ion binding"/>
    <property type="evidence" value="ECO:0007669"/>
    <property type="project" value="UniProtKB-KW"/>
</dbReference>
<dbReference type="GO" id="GO:0006310">
    <property type="term" value="P:DNA recombination"/>
    <property type="evidence" value="ECO:0007669"/>
    <property type="project" value="UniProtKB-UniRule"/>
</dbReference>
<dbReference type="GO" id="GO:0006281">
    <property type="term" value="P:DNA repair"/>
    <property type="evidence" value="ECO:0007669"/>
    <property type="project" value="UniProtKB-UniRule"/>
</dbReference>
<dbReference type="CDD" id="cd01025">
    <property type="entry name" value="TOPRIM_recR"/>
    <property type="match status" value="1"/>
</dbReference>
<dbReference type="FunFam" id="1.10.8.420:FF:000001">
    <property type="entry name" value="Recombination protein RecR"/>
    <property type="match status" value="1"/>
</dbReference>
<dbReference type="FunFam" id="3.40.1360.10:FF:000001">
    <property type="entry name" value="Recombination protein RecR"/>
    <property type="match status" value="1"/>
</dbReference>
<dbReference type="Gene3D" id="3.40.1360.10">
    <property type="match status" value="1"/>
</dbReference>
<dbReference type="Gene3D" id="6.10.250.240">
    <property type="match status" value="1"/>
</dbReference>
<dbReference type="Gene3D" id="1.10.8.420">
    <property type="entry name" value="RecR Domain 1"/>
    <property type="match status" value="1"/>
</dbReference>
<dbReference type="HAMAP" id="MF_00017">
    <property type="entry name" value="RecR"/>
    <property type="match status" value="1"/>
</dbReference>
<dbReference type="InterPro" id="IPR000093">
    <property type="entry name" value="DNA_Rcmb_RecR"/>
</dbReference>
<dbReference type="InterPro" id="IPR023627">
    <property type="entry name" value="Rcmb_RecR"/>
</dbReference>
<dbReference type="InterPro" id="IPR015967">
    <property type="entry name" value="Rcmb_RecR_Znf"/>
</dbReference>
<dbReference type="InterPro" id="IPR006171">
    <property type="entry name" value="TOPRIM_dom"/>
</dbReference>
<dbReference type="InterPro" id="IPR034137">
    <property type="entry name" value="TOPRIM_RecR"/>
</dbReference>
<dbReference type="NCBIfam" id="TIGR00615">
    <property type="entry name" value="recR"/>
    <property type="match status" value="1"/>
</dbReference>
<dbReference type="PANTHER" id="PTHR30446">
    <property type="entry name" value="RECOMBINATION PROTEIN RECR"/>
    <property type="match status" value="1"/>
</dbReference>
<dbReference type="PANTHER" id="PTHR30446:SF0">
    <property type="entry name" value="RECOMBINATION PROTEIN RECR"/>
    <property type="match status" value="1"/>
</dbReference>
<dbReference type="Pfam" id="PF21175">
    <property type="entry name" value="RecR_C"/>
    <property type="match status" value="1"/>
</dbReference>
<dbReference type="Pfam" id="PF21176">
    <property type="entry name" value="RecR_HhH"/>
    <property type="match status" value="1"/>
</dbReference>
<dbReference type="Pfam" id="PF02132">
    <property type="entry name" value="RecR_ZnF"/>
    <property type="match status" value="1"/>
</dbReference>
<dbReference type="Pfam" id="PF13662">
    <property type="entry name" value="Toprim_4"/>
    <property type="match status" value="1"/>
</dbReference>
<dbReference type="SMART" id="SM00493">
    <property type="entry name" value="TOPRIM"/>
    <property type="match status" value="1"/>
</dbReference>
<dbReference type="SUPFAM" id="SSF111304">
    <property type="entry name" value="Recombination protein RecR"/>
    <property type="match status" value="1"/>
</dbReference>
<dbReference type="PROSITE" id="PS01300">
    <property type="entry name" value="RECR"/>
    <property type="match status" value="1"/>
</dbReference>
<dbReference type="PROSITE" id="PS50880">
    <property type="entry name" value="TOPRIM"/>
    <property type="match status" value="1"/>
</dbReference>
<name>RECR_ECO81</name>